<organism>
    <name type="scientific">Borrelia garinii subsp. bavariensis (strain ATCC BAA-2496 / DSM 23469 / PBi)</name>
    <name type="common">Borreliella bavariensis</name>
    <dbReference type="NCBI Taxonomy" id="290434"/>
    <lineage>
        <taxon>Bacteria</taxon>
        <taxon>Pseudomonadati</taxon>
        <taxon>Spirochaetota</taxon>
        <taxon>Spirochaetia</taxon>
        <taxon>Spirochaetales</taxon>
        <taxon>Borreliaceae</taxon>
        <taxon>Borreliella</taxon>
    </lineage>
</organism>
<accession>Q661P8</accession>
<comment type="function">
    <text evidence="1">Catalyzes the attachment of glycine to tRNA(Gly).</text>
</comment>
<comment type="catalytic activity">
    <reaction evidence="1">
        <text>tRNA(Gly) + glycine + ATP = glycyl-tRNA(Gly) + AMP + diphosphate</text>
        <dbReference type="Rhea" id="RHEA:16013"/>
        <dbReference type="Rhea" id="RHEA-COMP:9664"/>
        <dbReference type="Rhea" id="RHEA-COMP:9683"/>
        <dbReference type="ChEBI" id="CHEBI:30616"/>
        <dbReference type="ChEBI" id="CHEBI:33019"/>
        <dbReference type="ChEBI" id="CHEBI:57305"/>
        <dbReference type="ChEBI" id="CHEBI:78442"/>
        <dbReference type="ChEBI" id="CHEBI:78522"/>
        <dbReference type="ChEBI" id="CHEBI:456215"/>
        <dbReference type="EC" id="6.1.1.14"/>
    </reaction>
</comment>
<comment type="subunit">
    <text evidence="1">Homodimer.</text>
</comment>
<comment type="subcellular location">
    <subcellularLocation>
        <location evidence="1">Cytoplasm</location>
    </subcellularLocation>
</comment>
<comment type="similarity">
    <text evidence="1">Belongs to the class-II aminoacyl-tRNA synthetase family.</text>
</comment>
<dbReference type="EC" id="6.1.1.14" evidence="1"/>
<dbReference type="EMBL" id="CP000013">
    <property type="protein sequence ID" value="AAU07223.1"/>
    <property type="molecule type" value="Genomic_DNA"/>
</dbReference>
<dbReference type="RefSeq" id="WP_011193697.1">
    <property type="nucleotide sequence ID" value="NZ_CP028872.1"/>
</dbReference>
<dbReference type="SMR" id="Q661P8"/>
<dbReference type="GeneID" id="45161158"/>
<dbReference type="KEGG" id="bga:BG0370"/>
<dbReference type="eggNOG" id="COG0423">
    <property type="taxonomic scope" value="Bacteria"/>
</dbReference>
<dbReference type="HOGENOM" id="CLU_015515_2_1_12"/>
<dbReference type="OrthoDB" id="9760853at2"/>
<dbReference type="Proteomes" id="UP000002276">
    <property type="component" value="Chromosome"/>
</dbReference>
<dbReference type="GO" id="GO:0005737">
    <property type="term" value="C:cytoplasm"/>
    <property type="evidence" value="ECO:0007669"/>
    <property type="project" value="UniProtKB-SubCell"/>
</dbReference>
<dbReference type="GO" id="GO:0005524">
    <property type="term" value="F:ATP binding"/>
    <property type="evidence" value="ECO:0007669"/>
    <property type="project" value="UniProtKB-UniRule"/>
</dbReference>
<dbReference type="GO" id="GO:0004820">
    <property type="term" value="F:glycine-tRNA ligase activity"/>
    <property type="evidence" value="ECO:0000250"/>
    <property type="project" value="UniProtKB"/>
</dbReference>
<dbReference type="GO" id="GO:0046983">
    <property type="term" value="F:protein dimerization activity"/>
    <property type="evidence" value="ECO:0000250"/>
    <property type="project" value="UniProtKB"/>
</dbReference>
<dbReference type="GO" id="GO:0006426">
    <property type="term" value="P:glycyl-tRNA aminoacylation"/>
    <property type="evidence" value="ECO:0007669"/>
    <property type="project" value="UniProtKB-UniRule"/>
</dbReference>
<dbReference type="CDD" id="cd00774">
    <property type="entry name" value="GlyRS-like_core"/>
    <property type="match status" value="1"/>
</dbReference>
<dbReference type="CDD" id="cd00858">
    <property type="entry name" value="GlyRS_anticodon"/>
    <property type="match status" value="1"/>
</dbReference>
<dbReference type="FunFam" id="3.40.50.800:FF:000002">
    <property type="entry name" value="Glycine--tRNA ligase"/>
    <property type="match status" value="1"/>
</dbReference>
<dbReference type="Gene3D" id="3.40.50.800">
    <property type="entry name" value="Anticodon-binding domain"/>
    <property type="match status" value="1"/>
</dbReference>
<dbReference type="Gene3D" id="3.30.930.10">
    <property type="entry name" value="Bira Bifunctional Protein, Domain 2"/>
    <property type="match status" value="1"/>
</dbReference>
<dbReference type="HAMAP" id="MF_00253_B">
    <property type="entry name" value="Gly_tRNA_synth_B"/>
    <property type="match status" value="1"/>
</dbReference>
<dbReference type="InterPro" id="IPR002314">
    <property type="entry name" value="aa-tRNA-synt_IIb"/>
</dbReference>
<dbReference type="InterPro" id="IPR006195">
    <property type="entry name" value="aa-tRNA-synth_II"/>
</dbReference>
<dbReference type="InterPro" id="IPR045864">
    <property type="entry name" value="aa-tRNA-synth_II/BPL/LPL"/>
</dbReference>
<dbReference type="InterPro" id="IPR004154">
    <property type="entry name" value="Anticodon-bd"/>
</dbReference>
<dbReference type="InterPro" id="IPR036621">
    <property type="entry name" value="Anticodon-bd_dom_sf"/>
</dbReference>
<dbReference type="InterPro" id="IPR027031">
    <property type="entry name" value="Gly-tRNA_synthase/POLG2"/>
</dbReference>
<dbReference type="InterPro" id="IPR022961">
    <property type="entry name" value="Gly_tRNA_ligase_bac"/>
</dbReference>
<dbReference type="InterPro" id="IPR033731">
    <property type="entry name" value="GlyRS-like_core"/>
</dbReference>
<dbReference type="InterPro" id="IPR002315">
    <property type="entry name" value="tRNA-synt_gly"/>
</dbReference>
<dbReference type="NCBIfam" id="TIGR00389">
    <property type="entry name" value="glyS_dimeric"/>
    <property type="match status" value="1"/>
</dbReference>
<dbReference type="NCBIfam" id="NF003211">
    <property type="entry name" value="PRK04173.1"/>
    <property type="match status" value="1"/>
</dbReference>
<dbReference type="PANTHER" id="PTHR10745:SF8">
    <property type="entry name" value="DNA POLYMERASE SUBUNIT GAMMA-2, MITOCHONDRIAL"/>
    <property type="match status" value="1"/>
</dbReference>
<dbReference type="PANTHER" id="PTHR10745">
    <property type="entry name" value="GLYCYL-TRNA SYNTHETASE/DNA POLYMERASE SUBUNIT GAMMA-2"/>
    <property type="match status" value="1"/>
</dbReference>
<dbReference type="Pfam" id="PF03129">
    <property type="entry name" value="HGTP_anticodon"/>
    <property type="match status" value="1"/>
</dbReference>
<dbReference type="Pfam" id="PF00587">
    <property type="entry name" value="tRNA-synt_2b"/>
    <property type="match status" value="1"/>
</dbReference>
<dbReference type="PRINTS" id="PR01043">
    <property type="entry name" value="TRNASYNTHGLY"/>
</dbReference>
<dbReference type="SUPFAM" id="SSF52954">
    <property type="entry name" value="Class II aaRS ABD-related"/>
    <property type="match status" value="1"/>
</dbReference>
<dbReference type="SUPFAM" id="SSF55681">
    <property type="entry name" value="Class II aaRS and biotin synthetases"/>
    <property type="match status" value="1"/>
</dbReference>
<dbReference type="PROSITE" id="PS50862">
    <property type="entry name" value="AA_TRNA_LIGASE_II"/>
    <property type="match status" value="1"/>
</dbReference>
<keyword id="KW-0030">Aminoacyl-tRNA synthetase</keyword>
<keyword id="KW-0067">ATP-binding</keyword>
<keyword id="KW-0963">Cytoplasm</keyword>
<keyword id="KW-0436">Ligase</keyword>
<keyword id="KW-0547">Nucleotide-binding</keyword>
<keyword id="KW-0648">Protein biosynthesis</keyword>
<proteinExistence type="inferred from homology"/>
<reference key="1">
    <citation type="journal article" date="2004" name="Nucleic Acids Res.">
        <title>Comparative analysis of the Borrelia garinii genome.</title>
        <authorList>
            <person name="Gloeckner G."/>
            <person name="Lehmann R."/>
            <person name="Romualdi A."/>
            <person name="Pradella S."/>
            <person name="Schulte-Spechtel U."/>
            <person name="Schilhabel M."/>
            <person name="Wilske B."/>
            <person name="Suehnel J."/>
            <person name="Platzer M."/>
        </authorList>
    </citation>
    <scope>NUCLEOTIDE SEQUENCE [LARGE SCALE GENOMIC DNA]</scope>
    <source>
        <strain>ATCC BAA-2496 / DSM 23469 / PBi</strain>
    </source>
</reference>
<feature type="chain" id="PRO_0000072950" description="Glycine--tRNA ligase">
    <location>
        <begin position="1"/>
        <end position="445"/>
    </location>
</feature>
<feature type="binding site" evidence="1">
    <location>
        <position position="97"/>
    </location>
    <ligand>
        <name>substrate</name>
    </ligand>
</feature>
<feature type="binding site" evidence="1">
    <location>
        <position position="145"/>
    </location>
    <ligand>
        <name>substrate</name>
    </ligand>
</feature>
<feature type="binding site" evidence="1">
    <location>
        <begin position="177"/>
        <end position="179"/>
    </location>
    <ligand>
        <name>ATP</name>
        <dbReference type="ChEBI" id="CHEBI:30616"/>
    </ligand>
</feature>
<feature type="binding site" evidence="1">
    <location>
        <begin position="187"/>
        <end position="192"/>
    </location>
    <ligand>
        <name>ATP</name>
        <dbReference type="ChEBI" id="CHEBI:30616"/>
    </ligand>
</feature>
<feature type="binding site" evidence="1">
    <location>
        <begin position="192"/>
        <end position="196"/>
    </location>
    <ligand>
        <name>substrate</name>
    </ligand>
</feature>
<feature type="binding site" evidence="1">
    <location>
        <begin position="262"/>
        <end position="263"/>
    </location>
    <ligand>
        <name>ATP</name>
        <dbReference type="ChEBI" id="CHEBI:30616"/>
    </ligand>
</feature>
<feature type="binding site" evidence="1">
    <location>
        <begin position="304"/>
        <end position="308"/>
    </location>
    <ligand>
        <name>substrate</name>
    </ligand>
</feature>
<feature type="binding site" evidence="1">
    <location>
        <begin position="308"/>
        <end position="311"/>
    </location>
    <ligand>
        <name>ATP</name>
        <dbReference type="ChEBI" id="CHEBI:30616"/>
    </ligand>
</feature>
<sequence length="445" mass="52237">MVRMEDIISLAKRKGFVFQSSEVYGGLSGAWDYGPLGVELKKNIKSEWWKSMVYLHENIVGLDSAIFMRPEIWRASGHIDGFSDSMVDCKDCKSRFRADFIDLSKNCPNCKVGNNFTSPRSFNLMFKTHIGVVEDSSSEIYLRPETAQGIFVNFRNVLDSSRLKIPFGIAQVGKAFRNEIVTKNFIFRTCEFEQMEMQFFVHPKQIDEWFCYWQQNRMNFFIETLKIRPDKLRFKAHDSTQLAHYAKSAFDIEYEFPFGFQEVEGIHNRGNYDLTQHSKFSNNPKIFEYHDLLTKERYVPHVIETSAGLTRSVLMTLCNAYSEEELSDGDKRIVLRLHPKLAPYKIAIFPLVKKVELVEIARRIYIELCDDFHIFYDDSGTIGKRYRRQDEIGTPYCVTVDYSTIEDETVTVRERNNMTQKRIFINDLYSYIKTEILNYKEDFNK</sequence>
<name>SYG_BORGP</name>
<evidence type="ECO:0000255" key="1">
    <source>
        <dbReference type="HAMAP-Rule" id="MF_00253"/>
    </source>
</evidence>
<protein>
    <recommendedName>
        <fullName evidence="1">Glycine--tRNA ligase</fullName>
        <ecNumber evidence="1">6.1.1.14</ecNumber>
    </recommendedName>
    <alternativeName>
        <fullName evidence="1">Glycyl-tRNA synthetase</fullName>
        <shortName evidence="1">GlyRS</shortName>
    </alternativeName>
</protein>
<gene>
    <name evidence="1" type="primary">glyQS</name>
    <name type="synonym">glyS</name>
    <name type="ordered locus">BG0370</name>
</gene>